<name>RS5_STAES</name>
<sequence>MARREEETKEFEERVVTINRVAKVVKGGRRFRFTALVVVGDKNGRVGFGTGKAQEVPEAIKKAVEAAKKDLVVVPRVEGTTPHTITGQYGSGSVFMKPAAPGTGVIAGGPVRAVLELAGITDILSKSLGSNTPINMVRATINGLQNLKNAEDVAKLRGKSVEELYN</sequence>
<organism>
    <name type="scientific">Staphylococcus epidermidis (strain ATCC 12228 / FDA PCI 1200)</name>
    <dbReference type="NCBI Taxonomy" id="176280"/>
    <lineage>
        <taxon>Bacteria</taxon>
        <taxon>Bacillati</taxon>
        <taxon>Bacillota</taxon>
        <taxon>Bacilli</taxon>
        <taxon>Bacillales</taxon>
        <taxon>Staphylococcaceae</taxon>
        <taxon>Staphylococcus</taxon>
    </lineage>
</organism>
<reference key="1">
    <citation type="journal article" date="2003" name="Mol. Microbiol.">
        <title>Genome-based analysis of virulence genes in a non-biofilm-forming Staphylococcus epidermidis strain (ATCC 12228).</title>
        <authorList>
            <person name="Zhang Y.-Q."/>
            <person name="Ren S.-X."/>
            <person name="Li H.-L."/>
            <person name="Wang Y.-X."/>
            <person name="Fu G."/>
            <person name="Yang J."/>
            <person name="Qin Z.-Q."/>
            <person name="Miao Y.-G."/>
            <person name="Wang W.-Y."/>
            <person name="Chen R.-S."/>
            <person name="Shen Y."/>
            <person name="Chen Z."/>
            <person name="Yuan Z.-H."/>
            <person name="Zhao G.-P."/>
            <person name="Qu D."/>
            <person name="Danchin A."/>
            <person name="Wen Y.-M."/>
        </authorList>
    </citation>
    <scope>NUCLEOTIDE SEQUENCE [LARGE SCALE GENOMIC DNA]</scope>
    <source>
        <strain>ATCC 12228 / FDA PCI 1200</strain>
    </source>
</reference>
<dbReference type="EMBL" id="AE015929">
    <property type="protein sequence ID" value="AAO05447.1"/>
    <property type="molecule type" value="Genomic_DNA"/>
</dbReference>
<dbReference type="RefSeq" id="NP_765361.1">
    <property type="nucleotide sequence ID" value="NC_004461.1"/>
</dbReference>
<dbReference type="RefSeq" id="WP_001829701.1">
    <property type="nucleotide sequence ID" value="NZ_WBME01000007.1"/>
</dbReference>
<dbReference type="SMR" id="Q8CRH7"/>
<dbReference type="GeneID" id="50018090"/>
<dbReference type="KEGG" id="sep:SE_1806"/>
<dbReference type="PATRIC" id="fig|176280.10.peg.1763"/>
<dbReference type="eggNOG" id="COG0098">
    <property type="taxonomic scope" value="Bacteria"/>
</dbReference>
<dbReference type="HOGENOM" id="CLU_065898_2_2_9"/>
<dbReference type="OrthoDB" id="9809045at2"/>
<dbReference type="Proteomes" id="UP000001411">
    <property type="component" value="Chromosome"/>
</dbReference>
<dbReference type="GO" id="GO:0015935">
    <property type="term" value="C:small ribosomal subunit"/>
    <property type="evidence" value="ECO:0007669"/>
    <property type="project" value="InterPro"/>
</dbReference>
<dbReference type="GO" id="GO:0019843">
    <property type="term" value="F:rRNA binding"/>
    <property type="evidence" value="ECO:0007669"/>
    <property type="project" value="UniProtKB-UniRule"/>
</dbReference>
<dbReference type="GO" id="GO:0003735">
    <property type="term" value="F:structural constituent of ribosome"/>
    <property type="evidence" value="ECO:0007669"/>
    <property type="project" value="InterPro"/>
</dbReference>
<dbReference type="GO" id="GO:0006412">
    <property type="term" value="P:translation"/>
    <property type="evidence" value="ECO:0007669"/>
    <property type="project" value="UniProtKB-UniRule"/>
</dbReference>
<dbReference type="FunFam" id="3.30.160.20:FF:000001">
    <property type="entry name" value="30S ribosomal protein S5"/>
    <property type="match status" value="1"/>
</dbReference>
<dbReference type="FunFam" id="3.30.230.10:FF:000002">
    <property type="entry name" value="30S ribosomal protein S5"/>
    <property type="match status" value="1"/>
</dbReference>
<dbReference type="Gene3D" id="3.30.160.20">
    <property type="match status" value="1"/>
</dbReference>
<dbReference type="Gene3D" id="3.30.230.10">
    <property type="match status" value="1"/>
</dbReference>
<dbReference type="HAMAP" id="MF_01307_B">
    <property type="entry name" value="Ribosomal_uS5_B"/>
    <property type="match status" value="1"/>
</dbReference>
<dbReference type="InterPro" id="IPR020568">
    <property type="entry name" value="Ribosomal_Su5_D2-typ_SF"/>
</dbReference>
<dbReference type="InterPro" id="IPR000851">
    <property type="entry name" value="Ribosomal_uS5"/>
</dbReference>
<dbReference type="InterPro" id="IPR005712">
    <property type="entry name" value="Ribosomal_uS5_bac-type"/>
</dbReference>
<dbReference type="InterPro" id="IPR005324">
    <property type="entry name" value="Ribosomal_uS5_C"/>
</dbReference>
<dbReference type="InterPro" id="IPR013810">
    <property type="entry name" value="Ribosomal_uS5_N"/>
</dbReference>
<dbReference type="InterPro" id="IPR018192">
    <property type="entry name" value="Ribosomal_uS5_N_CS"/>
</dbReference>
<dbReference type="InterPro" id="IPR014721">
    <property type="entry name" value="Ribsml_uS5_D2-typ_fold_subgr"/>
</dbReference>
<dbReference type="NCBIfam" id="TIGR01021">
    <property type="entry name" value="rpsE_bact"/>
    <property type="match status" value="1"/>
</dbReference>
<dbReference type="PANTHER" id="PTHR48277">
    <property type="entry name" value="MITOCHONDRIAL RIBOSOMAL PROTEIN S5"/>
    <property type="match status" value="1"/>
</dbReference>
<dbReference type="PANTHER" id="PTHR48277:SF1">
    <property type="entry name" value="MITOCHONDRIAL RIBOSOMAL PROTEIN S5"/>
    <property type="match status" value="1"/>
</dbReference>
<dbReference type="Pfam" id="PF00333">
    <property type="entry name" value="Ribosomal_S5"/>
    <property type="match status" value="1"/>
</dbReference>
<dbReference type="Pfam" id="PF03719">
    <property type="entry name" value="Ribosomal_S5_C"/>
    <property type="match status" value="1"/>
</dbReference>
<dbReference type="SUPFAM" id="SSF54768">
    <property type="entry name" value="dsRNA-binding domain-like"/>
    <property type="match status" value="1"/>
</dbReference>
<dbReference type="SUPFAM" id="SSF54211">
    <property type="entry name" value="Ribosomal protein S5 domain 2-like"/>
    <property type="match status" value="1"/>
</dbReference>
<dbReference type="PROSITE" id="PS00585">
    <property type="entry name" value="RIBOSOMAL_S5"/>
    <property type="match status" value="1"/>
</dbReference>
<dbReference type="PROSITE" id="PS50881">
    <property type="entry name" value="S5_DSRBD"/>
    <property type="match status" value="1"/>
</dbReference>
<keyword id="KW-0687">Ribonucleoprotein</keyword>
<keyword id="KW-0689">Ribosomal protein</keyword>
<keyword id="KW-0694">RNA-binding</keyword>
<keyword id="KW-0699">rRNA-binding</keyword>
<evidence type="ECO:0000255" key="1">
    <source>
        <dbReference type="HAMAP-Rule" id="MF_01307"/>
    </source>
</evidence>
<evidence type="ECO:0000305" key="2"/>
<proteinExistence type="inferred from homology"/>
<accession>Q8CRH7</accession>
<protein>
    <recommendedName>
        <fullName evidence="1">Small ribosomal subunit protein uS5</fullName>
    </recommendedName>
    <alternativeName>
        <fullName evidence="2">30S ribosomal protein S5</fullName>
    </alternativeName>
</protein>
<comment type="function">
    <text evidence="1">With S4 and S12 plays an important role in translational accuracy.</text>
</comment>
<comment type="function">
    <text evidence="1">Located at the back of the 30S subunit body where it stabilizes the conformation of the head with respect to the body.</text>
</comment>
<comment type="subunit">
    <text evidence="1">Part of the 30S ribosomal subunit. Contacts proteins S4 and S8.</text>
</comment>
<comment type="domain">
    <text>The N-terminal domain interacts with the head of the 30S subunit; the C-terminal domain interacts with the body and contacts protein S4. The interaction surface between S4 and S5 is involved in control of translational fidelity.</text>
</comment>
<comment type="similarity">
    <text evidence="1">Belongs to the universal ribosomal protein uS5 family.</text>
</comment>
<feature type="chain" id="PRO_0000131599" description="Small ribosomal subunit protein uS5">
    <location>
        <begin position="1"/>
        <end position="166"/>
    </location>
</feature>
<feature type="domain" description="S5 DRBM" evidence="1">
    <location>
        <begin position="11"/>
        <end position="74"/>
    </location>
</feature>
<gene>
    <name evidence="1" type="primary">rpsE</name>
    <name type="ordered locus">SE_1806</name>
</gene>